<comment type="function">
    <text evidence="1">Responsible for synthesis of pseudouridine from uracil-55 in the psi GC loop of transfer RNAs.</text>
</comment>
<comment type="catalytic activity">
    <reaction evidence="1">
        <text>uridine(55) in tRNA = pseudouridine(55) in tRNA</text>
        <dbReference type="Rhea" id="RHEA:42532"/>
        <dbReference type="Rhea" id="RHEA-COMP:10101"/>
        <dbReference type="Rhea" id="RHEA-COMP:10102"/>
        <dbReference type="ChEBI" id="CHEBI:65314"/>
        <dbReference type="ChEBI" id="CHEBI:65315"/>
        <dbReference type="EC" id="5.4.99.25"/>
    </reaction>
</comment>
<comment type="similarity">
    <text evidence="1">Belongs to the pseudouridine synthase TruB family. Type 1 subfamily.</text>
</comment>
<sequence>MDGALLIDKPKGITSTEVVERVKEKLKARKAGHTGTLDPIATGLLIILINKATRFSQFFIGMPKTYRFTVKFGAETDTYDAQGKVVETYEGELNCDKLKEVLNEFRGEILQTPPPFSAKKIKGRRAYELARKGKKVELKPVKITVYSLELLSCNPREKEAEFLAEISSGGYVRSLAYDIGKKLGIGGYMKELRRLKIDEISVEEAVSLEEFLSSENPEEYVLPVDTLFRVIPEVRLNTFEAGKILQGKRILIKNYDYEGLVKIYEDSKFIGIGELKGGVLSPKRLLV</sequence>
<organism>
    <name type="scientific">Aquifex aeolicus (strain VF5)</name>
    <dbReference type="NCBI Taxonomy" id="224324"/>
    <lineage>
        <taxon>Bacteria</taxon>
        <taxon>Pseudomonadati</taxon>
        <taxon>Aquificota</taxon>
        <taxon>Aquificia</taxon>
        <taxon>Aquificales</taxon>
        <taxon>Aquificaceae</taxon>
        <taxon>Aquifex</taxon>
    </lineage>
</organism>
<reference key="1">
    <citation type="journal article" date="1998" name="Nature">
        <title>The complete genome of the hyperthermophilic bacterium Aquifex aeolicus.</title>
        <authorList>
            <person name="Deckert G."/>
            <person name="Warren P.V."/>
            <person name="Gaasterland T."/>
            <person name="Young W.G."/>
            <person name="Lenox A.L."/>
            <person name="Graham D.E."/>
            <person name="Overbeek R."/>
            <person name="Snead M.A."/>
            <person name="Keller M."/>
            <person name="Aujay M."/>
            <person name="Huber R."/>
            <person name="Feldman R.A."/>
            <person name="Short J.M."/>
            <person name="Olsen G.J."/>
            <person name="Swanson R.V."/>
        </authorList>
    </citation>
    <scope>NUCLEOTIDE SEQUENCE [LARGE SCALE GENOMIC DNA]</scope>
    <source>
        <strain>VF5</strain>
    </source>
</reference>
<name>TRUB_AQUAE</name>
<dbReference type="EC" id="5.4.99.25" evidence="1"/>
<dbReference type="EMBL" id="AE000657">
    <property type="protein sequence ID" value="AAC06885.1"/>
    <property type="molecule type" value="Genomic_DNA"/>
</dbReference>
<dbReference type="PIR" id="F70361">
    <property type="entry name" value="F70361"/>
</dbReference>
<dbReference type="RefSeq" id="NP_213482.1">
    <property type="nucleotide sequence ID" value="NC_000918.1"/>
</dbReference>
<dbReference type="RefSeq" id="WP_010880420.1">
    <property type="nucleotide sequence ID" value="NC_000918.1"/>
</dbReference>
<dbReference type="SMR" id="O66922"/>
<dbReference type="FunCoup" id="O66922">
    <property type="interactions" value="425"/>
</dbReference>
<dbReference type="STRING" id="224324.aq_705"/>
<dbReference type="EnsemblBacteria" id="AAC06885">
    <property type="protein sequence ID" value="AAC06885"/>
    <property type="gene ID" value="aq_705"/>
</dbReference>
<dbReference type="KEGG" id="aae:aq_705"/>
<dbReference type="PATRIC" id="fig|224324.8.peg.564"/>
<dbReference type="eggNOG" id="COG0130">
    <property type="taxonomic scope" value="Bacteria"/>
</dbReference>
<dbReference type="HOGENOM" id="CLU_032087_0_3_0"/>
<dbReference type="InParanoid" id="O66922"/>
<dbReference type="OrthoDB" id="9802309at2"/>
<dbReference type="Proteomes" id="UP000000798">
    <property type="component" value="Chromosome"/>
</dbReference>
<dbReference type="GO" id="GO:0009982">
    <property type="term" value="F:pseudouridine synthase activity"/>
    <property type="evidence" value="ECO:0000318"/>
    <property type="project" value="GO_Central"/>
</dbReference>
<dbReference type="GO" id="GO:0003723">
    <property type="term" value="F:RNA binding"/>
    <property type="evidence" value="ECO:0007669"/>
    <property type="project" value="InterPro"/>
</dbReference>
<dbReference type="GO" id="GO:0160148">
    <property type="term" value="F:tRNA pseudouridine(55) synthase activity"/>
    <property type="evidence" value="ECO:0007669"/>
    <property type="project" value="UniProtKB-EC"/>
</dbReference>
<dbReference type="GO" id="GO:1990481">
    <property type="term" value="P:mRNA pseudouridine synthesis"/>
    <property type="evidence" value="ECO:0000318"/>
    <property type="project" value="GO_Central"/>
</dbReference>
<dbReference type="GO" id="GO:0006400">
    <property type="term" value="P:tRNA modification"/>
    <property type="evidence" value="ECO:0000318"/>
    <property type="project" value="GO_Central"/>
</dbReference>
<dbReference type="GO" id="GO:0031119">
    <property type="term" value="P:tRNA pseudouridine synthesis"/>
    <property type="evidence" value="ECO:0007669"/>
    <property type="project" value="UniProtKB-UniRule"/>
</dbReference>
<dbReference type="CDD" id="cd02573">
    <property type="entry name" value="PseudoU_synth_EcTruB"/>
    <property type="match status" value="1"/>
</dbReference>
<dbReference type="CDD" id="cd21152">
    <property type="entry name" value="PUA_TruB_bacterial"/>
    <property type="match status" value="1"/>
</dbReference>
<dbReference type="Gene3D" id="3.30.2350.10">
    <property type="entry name" value="Pseudouridine synthase"/>
    <property type="match status" value="1"/>
</dbReference>
<dbReference type="Gene3D" id="2.30.130.10">
    <property type="entry name" value="PUA domain"/>
    <property type="match status" value="1"/>
</dbReference>
<dbReference type="HAMAP" id="MF_01080">
    <property type="entry name" value="TruB_bact"/>
    <property type="match status" value="1"/>
</dbReference>
<dbReference type="InterPro" id="IPR020103">
    <property type="entry name" value="PsdUridine_synth_cat_dom_sf"/>
</dbReference>
<dbReference type="InterPro" id="IPR002501">
    <property type="entry name" value="PsdUridine_synth_N"/>
</dbReference>
<dbReference type="InterPro" id="IPR015947">
    <property type="entry name" value="PUA-like_sf"/>
</dbReference>
<dbReference type="InterPro" id="IPR036974">
    <property type="entry name" value="PUA_sf"/>
</dbReference>
<dbReference type="InterPro" id="IPR014780">
    <property type="entry name" value="tRNA_psdUridine_synth_TruB"/>
</dbReference>
<dbReference type="InterPro" id="IPR015240">
    <property type="entry name" value="tRNA_sdUridine_synth_fam1_C"/>
</dbReference>
<dbReference type="InterPro" id="IPR032819">
    <property type="entry name" value="TruB_C"/>
</dbReference>
<dbReference type="NCBIfam" id="TIGR00431">
    <property type="entry name" value="TruB"/>
    <property type="match status" value="1"/>
</dbReference>
<dbReference type="PANTHER" id="PTHR13767:SF2">
    <property type="entry name" value="PSEUDOURIDYLATE SYNTHASE TRUB1"/>
    <property type="match status" value="1"/>
</dbReference>
<dbReference type="PANTHER" id="PTHR13767">
    <property type="entry name" value="TRNA-PSEUDOURIDINE SYNTHASE"/>
    <property type="match status" value="1"/>
</dbReference>
<dbReference type="Pfam" id="PF09157">
    <property type="entry name" value="TruB-C_2"/>
    <property type="match status" value="1"/>
</dbReference>
<dbReference type="Pfam" id="PF16198">
    <property type="entry name" value="TruB_C_2"/>
    <property type="match status" value="1"/>
</dbReference>
<dbReference type="Pfam" id="PF01509">
    <property type="entry name" value="TruB_N"/>
    <property type="match status" value="1"/>
</dbReference>
<dbReference type="SUPFAM" id="SSF55120">
    <property type="entry name" value="Pseudouridine synthase"/>
    <property type="match status" value="1"/>
</dbReference>
<dbReference type="SUPFAM" id="SSF88697">
    <property type="entry name" value="PUA domain-like"/>
    <property type="match status" value="1"/>
</dbReference>
<evidence type="ECO:0000255" key="1">
    <source>
        <dbReference type="HAMAP-Rule" id="MF_01080"/>
    </source>
</evidence>
<keyword id="KW-0413">Isomerase</keyword>
<keyword id="KW-1185">Reference proteome</keyword>
<keyword id="KW-0819">tRNA processing</keyword>
<feature type="chain" id="PRO_0000121781" description="tRNA pseudouridine synthase B">
    <location>
        <begin position="1"/>
        <end position="287"/>
    </location>
</feature>
<feature type="active site" description="Nucleophile" evidence="1">
    <location>
        <position position="38"/>
    </location>
</feature>
<proteinExistence type="inferred from homology"/>
<accession>O66922</accession>
<gene>
    <name evidence="1" type="primary">truB</name>
    <name type="ordered locus">aq_705</name>
</gene>
<protein>
    <recommendedName>
        <fullName evidence="1">tRNA pseudouridine synthase B</fullName>
        <ecNumber evidence="1">5.4.99.25</ecNumber>
    </recommendedName>
    <alternativeName>
        <fullName evidence="1">tRNA pseudouridine(55) synthase</fullName>
        <shortName evidence="1">Psi55 synthase</shortName>
    </alternativeName>
    <alternativeName>
        <fullName evidence="1">tRNA pseudouridylate synthase</fullName>
    </alternativeName>
    <alternativeName>
        <fullName evidence="1">tRNA-uridine isomerase</fullName>
    </alternativeName>
</protein>